<reference key="1">
    <citation type="journal article" date="2009" name="FEBS J.">
        <title>Novel type III polyketide synthases from Aloe arborescens.</title>
        <authorList>
            <person name="Mizuuchi Y."/>
            <person name="Shi S.P."/>
            <person name="Wanibuchi K."/>
            <person name="Kojima A."/>
            <person name="Morita H."/>
            <person name="Noguchi H."/>
            <person name="Abe I."/>
        </authorList>
    </citation>
    <scope>NUCLEOTIDE SEQUENCE [MRNA]</scope>
    <scope>FUNCTION</scope>
    <scope>CATALYTIC ACTIVITY</scope>
</reference>
<gene>
    <name type="primary">PKS4</name>
</gene>
<comment type="function">
    <text evidence="2">Catalyzes the iterative condensations of 8 molecules of malonyl-CoA to produce aromatic octaketides, SEK4 and SEK4b, the products of the minimal polyketide synthase for the benzoisochromanequinone actinorhodin. May be involved in the biosynthesis of the octaketide barbaloin.</text>
</comment>
<comment type="pathway">
    <text>Secondary metabolite biosynthesis; flavonoid biosynthesis.</text>
</comment>
<comment type="subunit">
    <text evidence="1">Homodimer.</text>
</comment>
<comment type="miscellaneous">
    <text>A.arborescens is a medicinal plant rich in aromatic polyketides, such as pharmaceutically important aloenin (hexaketide), aloesin (heptaketide) and barbaloin (octaketide).</text>
</comment>
<comment type="similarity">
    <text evidence="3">Belongs to the thiolase-like superfamily. Chalcone/stilbene synthases family.</text>
</comment>
<keyword id="KW-0012">Acyltransferase</keyword>
<keyword id="KW-0284">Flavonoid biosynthesis</keyword>
<keyword id="KW-0808">Transferase</keyword>
<feature type="chain" id="PRO_0000422577" description="Octaketide synthase 2">
    <location>
        <begin position="1"/>
        <end position="403"/>
    </location>
</feature>
<feature type="active site" evidence="1">
    <location>
        <position position="174"/>
    </location>
</feature>
<feature type="binding site" evidence="1">
    <location>
        <position position="281"/>
    </location>
    <ligand>
        <name>CoA</name>
        <dbReference type="ChEBI" id="CHEBI:57287"/>
    </ligand>
</feature>
<feature type="binding site" evidence="1">
    <location>
        <begin position="318"/>
        <end position="321"/>
    </location>
    <ligand>
        <name>CoA</name>
        <dbReference type="ChEBI" id="CHEBI:57287"/>
    </ligand>
</feature>
<feature type="site" description="Determines the polyketide chain length and product specificity" evidence="1">
    <location>
        <position position="207"/>
    </location>
</feature>
<organism>
    <name type="scientific">Aloe arborescens</name>
    <name type="common">Kidachi aloe</name>
    <dbReference type="NCBI Taxonomy" id="45385"/>
    <lineage>
        <taxon>Eukaryota</taxon>
        <taxon>Viridiplantae</taxon>
        <taxon>Streptophyta</taxon>
        <taxon>Embryophyta</taxon>
        <taxon>Tracheophyta</taxon>
        <taxon>Spermatophyta</taxon>
        <taxon>Magnoliopsida</taxon>
        <taxon>Liliopsida</taxon>
        <taxon>Asparagales</taxon>
        <taxon>Asphodelaceae</taxon>
        <taxon>Asphodeloideae</taxon>
        <taxon>Aloe</taxon>
    </lineage>
</organism>
<protein>
    <recommendedName>
        <fullName>Octaketide synthase 2</fullName>
        <shortName>OKS 2</shortName>
        <ecNumber>2.3.1.-</ecNumber>
    </recommendedName>
    <alternativeName>
        <fullName>Polyketide synthase 4</fullName>
    </alternativeName>
</protein>
<proteinExistence type="evidence at protein level"/>
<dbReference type="EC" id="2.3.1.-"/>
<dbReference type="EMBL" id="FJ536166">
    <property type="protein sequence ID" value="ACR19997.1"/>
    <property type="molecule type" value="mRNA"/>
</dbReference>
<dbReference type="SMR" id="C4NF90"/>
<dbReference type="BioCyc" id="MetaCyc:MONOMER-15018"/>
<dbReference type="UniPathway" id="UPA00154"/>
<dbReference type="GO" id="GO:0016747">
    <property type="term" value="F:acyltransferase activity, transferring groups other than amino-acyl groups"/>
    <property type="evidence" value="ECO:0000314"/>
    <property type="project" value="UniProtKB"/>
</dbReference>
<dbReference type="GO" id="GO:0009813">
    <property type="term" value="P:flavonoid biosynthetic process"/>
    <property type="evidence" value="ECO:0000314"/>
    <property type="project" value="UniProtKB"/>
</dbReference>
<dbReference type="GO" id="GO:0030639">
    <property type="term" value="P:polyketide biosynthetic process"/>
    <property type="evidence" value="ECO:0007669"/>
    <property type="project" value="TreeGrafter"/>
</dbReference>
<dbReference type="CDD" id="cd00831">
    <property type="entry name" value="CHS_like"/>
    <property type="match status" value="1"/>
</dbReference>
<dbReference type="FunFam" id="3.40.47.10:FF:000014">
    <property type="entry name" value="Chalcone synthase 1"/>
    <property type="match status" value="1"/>
</dbReference>
<dbReference type="FunFam" id="3.40.47.10:FF:000025">
    <property type="entry name" value="Chalcone synthase 2"/>
    <property type="match status" value="1"/>
</dbReference>
<dbReference type="Gene3D" id="3.40.47.10">
    <property type="match status" value="2"/>
</dbReference>
<dbReference type="InterPro" id="IPR012328">
    <property type="entry name" value="Chalcone/stilbene_synt_C"/>
</dbReference>
<dbReference type="InterPro" id="IPR001099">
    <property type="entry name" value="Chalcone/stilbene_synt_N"/>
</dbReference>
<dbReference type="InterPro" id="IPR011141">
    <property type="entry name" value="Polyketide_synthase_type-III"/>
</dbReference>
<dbReference type="InterPro" id="IPR016039">
    <property type="entry name" value="Thiolase-like"/>
</dbReference>
<dbReference type="PANTHER" id="PTHR11877:SF80">
    <property type="entry name" value="CHALCONE SYNTHASE 1"/>
    <property type="match status" value="1"/>
</dbReference>
<dbReference type="PANTHER" id="PTHR11877">
    <property type="entry name" value="HYDROXYMETHYLGLUTARYL-COA SYNTHASE"/>
    <property type="match status" value="1"/>
</dbReference>
<dbReference type="Pfam" id="PF02797">
    <property type="entry name" value="Chal_sti_synt_C"/>
    <property type="match status" value="1"/>
</dbReference>
<dbReference type="Pfam" id="PF00195">
    <property type="entry name" value="Chal_sti_synt_N"/>
    <property type="match status" value="1"/>
</dbReference>
<dbReference type="PIRSF" id="PIRSF000451">
    <property type="entry name" value="PKS_III"/>
    <property type="match status" value="1"/>
</dbReference>
<dbReference type="SUPFAM" id="SSF53901">
    <property type="entry name" value="Thiolase-like"/>
    <property type="match status" value="2"/>
</dbReference>
<name>PKS4_ALOAR</name>
<evidence type="ECO:0000250" key="1"/>
<evidence type="ECO:0000269" key="2">
    <source>
    </source>
</evidence>
<evidence type="ECO:0000305" key="3"/>
<sequence length="403" mass="44385">MGSLSNYSPVMEDVQAIRKAQKADGTATVMAIGTAHPPHIFPQDTYADFYFRATNSEHKVELKKKFDRICKKTMIGKRYFNYDEEFLKKYPNITSFDEPSLNDRQDICVPGVPALGAEAAVKAIAEWGRPKSEITHLVFCTSCGVDMPSADFQCAKLLGLRTNVNKYCVYMQGCYAGGTVMRYAKDLAENNRGARVLVVCAELTIIGLRGPNESHLDNAIGNSLFGDGAAALIVGSDPIIGVERPMFEIVCAKQTVIPNSEDVIHLHMREAGLMFYMSKDSPETISNNVEACLVDVFKSVGMTPPEDWNSLFWIPHPGGRAILDQVEARLKLRPEKFGATRTVLWDCGNMVSACVLYILDEMRRKSVADGLATYGEGLEWGVLLGFGPGMTVETILLHSLPPV</sequence>
<accession>C4NF90</accession>